<dbReference type="EC" id="1.17.7.4" evidence="1"/>
<dbReference type="EMBL" id="CP000878">
    <property type="protein sequence ID" value="ABX08222.1"/>
    <property type="molecule type" value="Genomic_DNA"/>
</dbReference>
<dbReference type="RefSeq" id="WP_012194847.1">
    <property type="nucleotide sequence ID" value="NC_009976.1"/>
</dbReference>
<dbReference type="SMR" id="A9BDN6"/>
<dbReference type="STRING" id="93059.P9211_02911"/>
<dbReference type="KEGG" id="pmj:P9211_02911"/>
<dbReference type="eggNOG" id="COG0761">
    <property type="taxonomic scope" value="Bacteria"/>
</dbReference>
<dbReference type="HOGENOM" id="CLU_027486_4_0_3"/>
<dbReference type="OrthoDB" id="9804077at2"/>
<dbReference type="UniPathway" id="UPA00056">
    <property type="reaction ID" value="UER00097"/>
</dbReference>
<dbReference type="UniPathway" id="UPA00059">
    <property type="reaction ID" value="UER00105"/>
</dbReference>
<dbReference type="Proteomes" id="UP000000788">
    <property type="component" value="Chromosome"/>
</dbReference>
<dbReference type="GO" id="GO:0051539">
    <property type="term" value="F:4 iron, 4 sulfur cluster binding"/>
    <property type="evidence" value="ECO:0007669"/>
    <property type="project" value="UniProtKB-UniRule"/>
</dbReference>
<dbReference type="GO" id="GO:0051745">
    <property type="term" value="F:4-hydroxy-3-methylbut-2-enyl diphosphate reductase activity"/>
    <property type="evidence" value="ECO:0007669"/>
    <property type="project" value="UniProtKB-UniRule"/>
</dbReference>
<dbReference type="GO" id="GO:0046872">
    <property type="term" value="F:metal ion binding"/>
    <property type="evidence" value="ECO:0007669"/>
    <property type="project" value="UniProtKB-KW"/>
</dbReference>
<dbReference type="GO" id="GO:0050992">
    <property type="term" value="P:dimethylallyl diphosphate biosynthetic process"/>
    <property type="evidence" value="ECO:0007669"/>
    <property type="project" value="UniProtKB-UniRule"/>
</dbReference>
<dbReference type="GO" id="GO:0019288">
    <property type="term" value="P:isopentenyl diphosphate biosynthetic process, methylerythritol 4-phosphate pathway"/>
    <property type="evidence" value="ECO:0007669"/>
    <property type="project" value="UniProtKB-UniRule"/>
</dbReference>
<dbReference type="GO" id="GO:0016114">
    <property type="term" value="P:terpenoid biosynthetic process"/>
    <property type="evidence" value="ECO:0007669"/>
    <property type="project" value="UniProtKB-UniRule"/>
</dbReference>
<dbReference type="CDD" id="cd13944">
    <property type="entry name" value="lytB_ispH"/>
    <property type="match status" value="1"/>
</dbReference>
<dbReference type="Gene3D" id="3.40.50.11270">
    <property type="match status" value="1"/>
</dbReference>
<dbReference type="Gene3D" id="3.40.1010.20">
    <property type="entry name" value="4-hydroxy-3-methylbut-2-enyl diphosphate reductase, catalytic domain"/>
    <property type="match status" value="2"/>
</dbReference>
<dbReference type="HAMAP" id="MF_00191">
    <property type="entry name" value="IspH"/>
    <property type="match status" value="1"/>
</dbReference>
<dbReference type="InterPro" id="IPR003451">
    <property type="entry name" value="LytB/IspH"/>
</dbReference>
<dbReference type="NCBIfam" id="TIGR00216">
    <property type="entry name" value="ispH_lytB"/>
    <property type="match status" value="1"/>
</dbReference>
<dbReference type="NCBIfam" id="NF009911">
    <property type="entry name" value="PRK13371.1"/>
    <property type="match status" value="1"/>
</dbReference>
<dbReference type="PANTHER" id="PTHR31619">
    <property type="entry name" value="4-HYDROXY-3-METHYLBUT-2-ENYL DIPHOSPHATE REDUCTASE, CHLOROPLASTIC"/>
    <property type="match status" value="1"/>
</dbReference>
<dbReference type="PANTHER" id="PTHR31619:SF5">
    <property type="entry name" value="4-HYDROXY-3-METHYLBUT-2-ENYL DIPHOSPHATE REDUCTASE, CHLOROPLASTIC"/>
    <property type="match status" value="1"/>
</dbReference>
<dbReference type="Pfam" id="PF02401">
    <property type="entry name" value="LYTB"/>
    <property type="match status" value="1"/>
</dbReference>
<protein>
    <recommendedName>
        <fullName evidence="1">4-hydroxy-3-methylbut-2-enyl diphosphate reductase</fullName>
        <shortName evidence="1">HMBPP reductase</shortName>
        <ecNumber evidence="1">1.17.7.4</ecNumber>
    </recommendedName>
</protein>
<name>ISPH_PROM4</name>
<organism>
    <name type="scientific">Prochlorococcus marinus (strain MIT 9211)</name>
    <dbReference type="NCBI Taxonomy" id="93059"/>
    <lineage>
        <taxon>Bacteria</taxon>
        <taxon>Bacillati</taxon>
        <taxon>Cyanobacteriota</taxon>
        <taxon>Cyanophyceae</taxon>
        <taxon>Synechococcales</taxon>
        <taxon>Prochlorococcaceae</taxon>
        <taxon>Prochlorococcus</taxon>
    </lineage>
</organism>
<evidence type="ECO:0000255" key="1">
    <source>
        <dbReference type="HAMAP-Rule" id="MF_00191"/>
    </source>
</evidence>
<reference key="1">
    <citation type="journal article" date="2007" name="PLoS Genet.">
        <title>Patterns and implications of gene gain and loss in the evolution of Prochlorococcus.</title>
        <authorList>
            <person name="Kettler G.C."/>
            <person name="Martiny A.C."/>
            <person name="Huang K."/>
            <person name="Zucker J."/>
            <person name="Coleman M.L."/>
            <person name="Rodrigue S."/>
            <person name="Chen F."/>
            <person name="Lapidus A."/>
            <person name="Ferriera S."/>
            <person name="Johnson J."/>
            <person name="Steglich C."/>
            <person name="Church G.M."/>
            <person name="Richardson P."/>
            <person name="Chisholm S.W."/>
        </authorList>
    </citation>
    <scope>NUCLEOTIDE SEQUENCE [LARGE SCALE GENOMIC DNA]</scope>
    <source>
        <strain>MIT 9211</strain>
    </source>
</reference>
<accession>A9BDN6</accession>
<comment type="function">
    <text evidence="1">Catalyzes the conversion of 1-hydroxy-2-methyl-2-(E)-butenyl 4-diphosphate (HMBPP) into a mixture of isopentenyl diphosphate (IPP) and dimethylallyl diphosphate (DMAPP). Acts in the terminal step of the DOXP/MEP pathway for isoprenoid precursor biosynthesis.</text>
</comment>
<comment type="catalytic activity">
    <reaction evidence="1">
        <text>isopentenyl diphosphate + 2 oxidized [2Fe-2S]-[ferredoxin] + H2O = (2E)-4-hydroxy-3-methylbut-2-enyl diphosphate + 2 reduced [2Fe-2S]-[ferredoxin] + 2 H(+)</text>
        <dbReference type="Rhea" id="RHEA:24488"/>
        <dbReference type="Rhea" id="RHEA-COMP:10000"/>
        <dbReference type="Rhea" id="RHEA-COMP:10001"/>
        <dbReference type="ChEBI" id="CHEBI:15377"/>
        <dbReference type="ChEBI" id="CHEBI:15378"/>
        <dbReference type="ChEBI" id="CHEBI:33737"/>
        <dbReference type="ChEBI" id="CHEBI:33738"/>
        <dbReference type="ChEBI" id="CHEBI:128753"/>
        <dbReference type="ChEBI" id="CHEBI:128769"/>
        <dbReference type="EC" id="1.17.7.4"/>
    </reaction>
</comment>
<comment type="catalytic activity">
    <reaction evidence="1">
        <text>dimethylallyl diphosphate + 2 oxidized [2Fe-2S]-[ferredoxin] + H2O = (2E)-4-hydroxy-3-methylbut-2-enyl diphosphate + 2 reduced [2Fe-2S]-[ferredoxin] + 2 H(+)</text>
        <dbReference type="Rhea" id="RHEA:24825"/>
        <dbReference type="Rhea" id="RHEA-COMP:10000"/>
        <dbReference type="Rhea" id="RHEA-COMP:10001"/>
        <dbReference type="ChEBI" id="CHEBI:15377"/>
        <dbReference type="ChEBI" id="CHEBI:15378"/>
        <dbReference type="ChEBI" id="CHEBI:33737"/>
        <dbReference type="ChEBI" id="CHEBI:33738"/>
        <dbReference type="ChEBI" id="CHEBI:57623"/>
        <dbReference type="ChEBI" id="CHEBI:128753"/>
        <dbReference type="EC" id="1.17.7.4"/>
    </reaction>
</comment>
<comment type="cofactor">
    <cofactor evidence="1">
        <name>[4Fe-4S] cluster</name>
        <dbReference type="ChEBI" id="CHEBI:49883"/>
    </cofactor>
    <text evidence="1">Binds 1 [4Fe-4S] cluster per subunit.</text>
</comment>
<comment type="pathway">
    <text evidence="1">Isoprenoid biosynthesis; dimethylallyl diphosphate biosynthesis; dimethylallyl diphosphate from (2E)-4-hydroxy-3-methylbutenyl diphosphate: step 1/1.</text>
</comment>
<comment type="pathway">
    <text evidence="1">Isoprenoid biosynthesis; isopentenyl diphosphate biosynthesis via DXP pathway; isopentenyl diphosphate from 1-deoxy-D-xylulose 5-phosphate: step 6/6.</text>
</comment>
<comment type="similarity">
    <text evidence="1">Belongs to the IspH family.</text>
</comment>
<sequence>MDTQAFKRSLHHSDRYNRRGFESPTKRAQALEKAYQSNLIGSIRDNGYLFEHGRLRVKLAEAFGFCWGVERAVAMAYETRRHYPKESIWITNEIIHNPSVNDHLRNMNVRFISAEKGIKNFSSVQEGDVVILPAFGATVQEMKLLHERGCHIIDTTCPWVSKVWHTVEKHKKHEFTSIIHGKVKHEETLATSSFAGTYLVVLDLEEAQYVANYILGKGDREEFLKRFSKASSQGFDPDRDLQRLGVANQTTMLKSETEEIGRLFEKTMLRKYGPAELTEHFLAFNTICDATEERQDAMFSLVDEPLDLLVVIGGFNSSNTTHLQEIAISRGIRSFHIDTPERIGDQENTITHKPLGDDLITEKNFLPEGNISVGITSGASTPDRVVEHVIHKLINLSEEKAFVD</sequence>
<feature type="chain" id="PRO_1000098964" description="4-hydroxy-3-methylbut-2-enyl diphosphate reductase">
    <location>
        <begin position="1"/>
        <end position="404"/>
    </location>
</feature>
<feature type="active site" description="Proton donor" evidence="1">
    <location>
        <position position="187"/>
    </location>
</feature>
<feature type="binding site" evidence="1">
    <location>
        <position position="66"/>
    </location>
    <ligand>
        <name>[4Fe-4S] cluster</name>
        <dbReference type="ChEBI" id="CHEBI:49883"/>
    </ligand>
</feature>
<feature type="binding site" evidence="1">
    <location>
        <position position="96"/>
    </location>
    <ligand>
        <name>(2E)-4-hydroxy-3-methylbut-2-enyl diphosphate</name>
        <dbReference type="ChEBI" id="CHEBI:128753"/>
    </ligand>
</feature>
<feature type="binding site" evidence="1">
    <location>
        <position position="96"/>
    </location>
    <ligand>
        <name>dimethylallyl diphosphate</name>
        <dbReference type="ChEBI" id="CHEBI:57623"/>
    </ligand>
</feature>
<feature type="binding site" evidence="1">
    <location>
        <position position="96"/>
    </location>
    <ligand>
        <name>isopentenyl diphosphate</name>
        <dbReference type="ChEBI" id="CHEBI:128769"/>
    </ligand>
</feature>
<feature type="binding site" evidence="1">
    <location>
        <position position="157"/>
    </location>
    <ligand>
        <name>[4Fe-4S] cluster</name>
        <dbReference type="ChEBI" id="CHEBI:49883"/>
    </ligand>
</feature>
<feature type="binding site" evidence="1">
    <location>
        <position position="185"/>
    </location>
    <ligand>
        <name>(2E)-4-hydroxy-3-methylbut-2-enyl diphosphate</name>
        <dbReference type="ChEBI" id="CHEBI:128753"/>
    </ligand>
</feature>
<feature type="binding site" evidence="1">
    <location>
        <position position="185"/>
    </location>
    <ligand>
        <name>dimethylallyl diphosphate</name>
        <dbReference type="ChEBI" id="CHEBI:57623"/>
    </ligand>
</feature>
<feature type="binding site" evidence="1">
    <location>
        <position position="185"/>
    </location>
    <ligand>
        <name>isopentenyl diphosphate</name>
        <dbReference type="ChEBI" id="CHEBI:128769"/>
    </ligand>
</feature>
<feature type="binding site" evidence="1">
    <location>
        <position position="250"/>
    </location>
    <ligand>
        <name>(2E)-4-hydroxy-3-methylbut-2-enyl diphosphate</name>
        <dbReference type="ChEBI" id="CHEBI:128753"/>
    </ligand>
</feature>
<feature type="binding site" evidence="1">
    <location>
        <position position="288"/>
    </location>
    <ligand>
        <name>[4Fe-4S] cluster</name>
        <dbReference type="ChEBI" id="CHEBI:49883"/>
    </ligand>
</feature>
<feature type="binding site" evidence="1">
    <location>
        <position position="317"/>
    </location>
    <ligand>
        <name>(2E)-4-hydroxy-3-methylbut-2-enyl diphosphate</name>
        <dbReference type="ChEBI" id="CHEBI:128753"/>
    </ligand>
</feature>
<feature type="binding site" evidence="1">
    <location>
        <position position="317"/>
    </location>
    <ligand>
        <name>dimethylallyl diphosphate</name>
        <dbReference type="ChEBI" id="CHEBI:57623"/>
    </ligand>
</feature>
<feature type="binding site" evidence="1">
    <location>
        <position position="317"/>
    </location>
    <ligand>
        <name>isopentenyl diphosphate</name>
        <dbReference type="ChEBI" id="CHEBI:128769"/>
    </ligand>
</feature>
<feature type="binding site" evidence="1">
    <location>
        <position position="318"/>
    </location>
    <ligand>
        <name>(2E)-4-hydroxy-3-methylbut-2-enyl diphosphate</name>
        <dbReference type="ChEBI" id="CHEBI:128753"/>
    </ligand>
</feature>
<feature type="binding site" evidence="1">
    <location>
        <position position="318"/>
    </location>
    <ligand>
        <name>dimethylallyl diphosphate</name>
        <dbReference type="ChEBI" id="CHEBI:57623"/>
    </ligand>
</feature>
<feature type="binding site" evidence="1">
    <location>
        <position position="318"/>
    </location>
    <ligand>
        <name>isopentenyl diphosphate</name>
        <dbReference type="ChEBI" id="CHEBI:128769"/>
    </ligand>
</feature>
<feature type="binding site" evidence="1">
    <location>
        <position position="319"/>
    </location>
    <ligand>
        <name>(2E)-4-hydroxy-3-methylbut-2-enyl diphosphate</name>
        <dbReference type="ChEBI" id="CHEBI:128753"/>
    </ligand>
</feature>
<feature type="binding site" evidence="1">
    <location>
        <position position="319"/>
    </location>
    <ligand>
        <name>dimethylallyl diphosphate</name>
        <dbReference type="ChEBI" id="CHEBI:57623"/>
    </ligand>
</feature>
<feature type="binding site" evidence="1">
    <location>
        <position position="319"/>
    </location>
    <ligand>
        <name>isopentenyl diphosphate</name>
        <dbReference type="ChEBI" id="CHEBI:128769"/>
    </ligand>
</feature>
<feature type="binding site" evidence="1">
    <location>
        <position position="380"/>
    </location>
    <ligand>
        <name>(2E)-4-hydroxy-3-methylbut-2-enyl diphosphate</name>
        <dbReference type="ChEBI" id="CHEBI:128753"/>
    </ligand>
</feature>
<feature type="binding site" evidence="1">
    <location>
        <position position="380"/>
    </location>
    <ligand>
        <name>dimethylallyl diphosphate</name>
        <dbReference type="ChEBI" id="CHEBI:57623"/>
    </ligand>
</feature>
<feature type="binding site" evidence="1">
    <location>
        <position position="380"/>
    </location>
    <ligand>
        <name>isopentenyl diphosphate</name>
        <dbReference type="ChEBI" id="CHEBI:128769"/>
    </ligand>
</feature>
<keyword id="KW-0004">4Fe-4S</keyword>
<keyword id="KW-0408">Iron</keyword>
<keyword id="KW-0411">Iron-sulfur</keyword>
<keyword id="KW-0414">Isoprene biosynthesis</keyword>
<keyword id="KW-0479">Metal-binding</keyword>
<keyword id="KW-0560">Oxidoreductase</keyword>
<keyword id="KW-1185">Reference proteome</keyword>
<gene>
    <name evidence="1" type="primary">ispH</name>
    <name type="ordered locus">P9211_02911</name>
</gene>
<proteinExistence type="inferred from homology"/>